<sequence length="569" mass="65268">MDSSTATAMTAPFIDPTDHVNLKTDTDASENRRMGNYKPSIWNYDFLQSLATHHNIVEERHLKLAEKLKGQVKFMFGAPMEPLAKLELVDVVQRLGLNHRFETEIKEALFSIYKDESNGWWFGHLHATSLRFRLLRQCGLFIPQDVFKTFQNKTGEFDMKLCDNVKGLLSLYEASYLGWKGENILDEAKAFATKYLKSAWENISEKWLAKRVKHALALPLHWRVPRIEARWFIEAYEQEANMNPTLLKLAKLDFNMVQSIHQKEIGELARWWVTTGLDKLAFARNNLLQSYMWSCAIASDPKFKLARETIVEIGSVLTVVDDAYDVYGSMDELDLYTSSVERWSCVEIDKLPNTLKLIFMSMFNKTNEVGLRVQHERGYNSIPTFIKAWVQQCKSYQKEARWFHGGHTPPLEEYSLNGLVSIGFPLLLITGYVAIAENEAALDKVHPLPDLLHYSSLLSRLINDIGTSPDEMARGDNLKSIHCYMNGTGASEEVAREHIKGVIEENWKILNQCCFDQSQFQEPFITFNLNSVRGSHFFYEFGDGFGVTDSWTKVDMKSVLIDPIPLGEE</sequence>
<name>SAUSY_SANAS</name>
<organism>
    <name type="scientific">Santalum austrocaledonicum</name>
    <name type="common">Sandalwood</name>
    <dbReference type="NCBI Taxonomy" id="293154"/>
    <lineage>
        <taxon>Eukaryota</taxon>
        <taxon>Viridiplantae</taxon>
        <taxon>Streptophyta</taxon>
        <taxon>Embryophyta</taxon>
        <taxon>Tracheophyta</taxon>
        <taxon>Spermatophyta</taxon>
        <taxon>Magnoliopsida</taxon>
        <taxon>eudicotyledons</taxon>
        <taxon>Gunneridae</taxon>
        <taxon>Pentapetalae</taxon>
        <taxon>Santalales</taxon>
        <taxon>Santalaceae</taxon>
        <taxon>Santalum</taxon>
    </lineage>
</organism>
<feature type="chain" id="PRO_0000418943" description="Santalene synthase">
    <location>
        <begin position="1"/>
        <end position="569"/>
    </location>
</feature>
<feature type="short sequence motif" description="DDXXD motif" evidence="2">
    <location>
        <begin position="321"/>
        <end position="325"/>
    </location>
</feature>
<feature type="binding site" evidence="2">
    <location>
        <position position="284"/>
    </location>
    <ligand>
        <name>(2E)-geranyl diphosphate</name>
        <dbReference type="ChEBI" id="CHEBI:58057"/>
    </ligand>
</feature>
<feature type="binding site" evidence="2">
    <location>
        <position position="321"/>
    </location>
    <ligand>
        <name>(2E)-geranyl diphosphate</name>
        <dbReference type="ChEBI" id="CHEBI:58057"/>
    </ligand>
</feature>
<feature type="binding site" evidence="2">
    <location>
        <position position="321"/>
    </location>
    <ligand>
        <name>Mg(2+)</name>
        <dbReference type="ChEBI" id="CHEBI:18420"/>
        <label>1</label>
    </ligand>
</feature>
<feature type="binding site" evidence="2">
    <location>
        <position position="321"/>
    </location>
    <ligand>
        <name>Mg(2+)</name>
        <dbReference type="ChEBI" id="CHEBI:18420"/>
        <label>2</label>
    </ligand>
</feature>
<feature type="binding site" evidence="2">
    <location>
        <position position="325"/>
    </location>
    <ligand>
        <name>(2E)-geranyl diphosphate</name>
        <dbReference type="ChEBI" id="CHEBI:58057"/>
    </ligand>
</feature>
<feature type="binding site" evidence="2">
    <location>
        <position position="325"/>
    </location>
    <ligand>
        <name>Mg(2+)</name>
        <dbReference type="ChEBI" id="CHEBI:18420"/>
        <label>1</label>
    </ligand>
</feature>
<feature type="binding site" evidence="2">
    <location>
        <position position="325"/>
    </location>
    <ligand>
        <name>Mg(2+)</name>
        <dbReference type="ChEBI" id="CHEBI:18420"/>
        <label>2</label>
    </ligand>
</feature>
<feature type="binding site" evidence="2">
    <location>
        <position position="460"/>
    </location>
    <ligand>
        <name>(2E)-geranyl diphosphate</name>
        <dbReference type="ChEBI" id="CHEBI:58057"/>
    </ligand>
</feature>
<feature type="binding site" evidence="2">
    <location>
        <position position="463"/>
    </location>
    <ligand>
        <name>Mg(2+)</name>
        <dbReference type="ChEBI" id="CHEBI:18420"/>
        <label>3</label>
    </ligand>
</feature>
<feature type="binding site" evidence="2">
    <location>
        <position position="467"/>
    </location>
    <ligand>
        <name>Mg(2+)</name>
        <dbReference type="ChEBI" id="CHEBI:18420"/>
        <label>3</label>
    </ligand>
</feature>
<feature type="binding site" evidence="2">
    <location>
        <position position="471"/>
    </location>
    <ligand>
        <name>Mg(2+)</name>
        <dbReference type="ChEBI" id="CHEBI:18420"/>
        <label>3</label>
    </ligand>
</feature>
<evidence type="ECO:0000250" key="1">
    <source>
        <dbReference type="UniProtKB" id="A0A1C9J6A7"/>
    </source>
</evidence>
<evidence type="ECO:0000250" key="2">
    <source>
        <dbReference type="UniProtKB" id="Q40577"/>
    </source>
</evidence>
<evidence type="ECO:0000269" key="3">
    <source>
    </source>
</evidence>
<evidence type="ECO:0000305" key="4"/>
<reference key="1">
    <citation type="journal article" date="2011" name="J. Biol. Chem.">
        <title>Sandalwood fragrance biosynthesis involves sesquiterpene synthases of both the terpene synthase (TPS)-a and TPS-b Subfamilies, including santalene synthases.</title>
        <authorList>
            <person name="Jones C.G."/>
            <person name="Moniodis J."/>
            <person name="Zulak K.G."/>
            <person name="Scaffidi A."/>
            <person name="Plummer J.A."/>
            <person name="Ghisalberti E.L."/>
            <person name="Barbour E.L."/>
            <person name="Bohlmann J."/>
        </authorList>
    </citation>
    <scope>NUCLEOTIDE SEQUENCE [MRNA]</scope>
    <scope>FUNCTION</scope>
    <scope>CATALYTIC ACTIVITY</scope>
    <scope>BIOPHYSICOCHEMICAL PROPERTIES</scope>
</reference>
<proteinExistence type="evidence at protein level"/>
<comment type="function">
    <text evidence="3">Catalyzes a mixture of sesquiterpenoids from (2E,6E)-farnesyl diphosphate in fragrance biosynthesis. Catalyzes the formation of alpha-santalene, beta-santalene, epi-beta-santalene and exo-alpha-bergamotene, as well as traces of alpha-farnesene and beta-farnesene.</text>
</comment>
<comment type="catalytic activity">
    <reaction evidence="3">
        <text>(2E,6E)-farnesyl diphosphate = (1S,5S,6R)-alpha-bergamotene + diphosphate</text>
        <dbReference type="Rhea" id="RHEA:31427"/>
        <dbReference type="ChEBI" id="CHEBI:33019"/>
        <dbReference type="ChEBI" id="CHEBI:62756"/>
        <dbReference type="ChEBI" id="CHEBI:175763"/>
        <dbReference type="EC" id="4.2.3.81"/>
    </reaction>
</comment>
<comment type="catalytic activity">
    <reaction evidence="3">
        <text>(2E,6E)-farnesyl diphosphate = (+)-alpha-santalene + diphosphate</text>
        <dbReference type="Rhea" id="RHEA:31435"/>
        <dbReference type="ChEBI" id="CHEBI:33019"/>
        <dbReference type="ChEBI" id="CHEBI:61677"/>
        <dbReference type="ChEBI" id="CHEBI:175763"/>
        <dbReference type="EC" id="4.2.3.82"/>
    </reaction>
</comment>
<comment type="catalytic activity">
    <reaction evidence="3">
        <text>(2E,6E)-farnesyl diphosphate = (-)-beta-santalene + diphosphate</text>
        <dbReference type="Rhea" id="RHEA:31431"/>
        <dbReference type="ChEBI" id="CHEBI:10440"/>
        <dbReference type="ChEBI" id="CHEBI:33019"/>
        <dbReference type="ChEBI" id="CHEBI:175763"/>
        <dbReference type="EC" id="4.2.3.83"/>
    </reaction>
</comment>
<comment type="cofactor">
    <cofactor evidence="1">
        <name>Mg(2+)</name>
        <dbReference type="ChEBI" id="CHEBI:18420"/>
    </cofactor>
    <cofactor evidence="1">
        <name>Mn(2+)</name>
        <dbReference type="ChEBI" id="CHEBI:29035"/>
    </cofactor>
    <text evidence="1">Binds 3 Mg(2+) or Mn(2+) ions per subunit.</text>
</comment>
<comment type="biophysicochemical properties">
    <kinetics>
        <KM evidence="3">1.4 uM for (2E,6E)-farnesyl diphosphate</KM>
        <text>kcat is 0.91 sec(-1) with (2E,6E)-farnesyl diphosphate as substrate.</text>
    </kinetics>
</comment>
<comment type="domain">
    <text evidence="2">The Asp-Asp-Xaa-Xaa-Asp/Glu (DDXXD/E) motif is important for the catalytic activity, presumably through binding to Mg(2+).</text>
</comment>
<comment type="similarity">
    <text evidence="4">Belongs to the terpene synthase family. Tpsb subfamily.</text>
</comment>
<dbReference type="EC" id="4.2.3.82" evidence="3"/>
<dbReference type="EC" id="4.2.3.83" evidence="3"/>
<dbReference type="EC" id="4.2.3.81" evidence="3"/>
<dbReference type="EMBL" id="HQ343277">
    <property type="protein sequence ID" value="ADO87001.1"/>
    <property type="molecule type" value="mRNA"/>
</dbReference>
<dbReference type="SMR" id="E3W203"/>
<dbReference type="KEGG" id="ag:ADO87001"/>
<dbReference type="BRENDA" id="4.2.3.81">
    <property type="organism ID" value="12837"/>
</dbReference>
<dbReference type="BRENDA" id="4.2.3.82">
    <property type="organism ID" value="12837"/>
</dbReference>
<dbReference type="BRENDA" id="4.2.3.83">
    <property type="organism ID" value="12837"/>
</dbReference>
<dbReference type="GO" id="GO:0000287">
    <property type="term" value="F:magnesium ion binding"/>
    <property type="evidence" value="ECO:0007669"/>
    <property type="project" value="InterPro"/>
</dbReference>
<dbReference type="GO" id="GO:0010333">
    <property type="term" value="F:terpene synthase activity"/>
    <property type="evidence" value="ECO:0007669"/>
    <property type="project" value="InterPro"/>
</dbReference>
<dbReference type="GO" id="GO:0016102">
    <property type="term" value="P:diterpenoid biosynthetic process"/>
    <property type="evidence" value="ECO:0007669"/>
    <property type="project" value="InterPro"/>
</dbReference>
<dbReference type="CDD" id="cd00684">
    <property type="entry name" value="Terpene_cyclase_plant_C1"/>
    <property type="match status" value="1"/>
</dbReference>
<dbReference type="FunFam" id="1.10.600.10:FF:000007">
    <property type="entry name" value="Isoprene synthase, chloroplastic"/>
    <property type="match status" value="1"/>
</dbReference>
<dbReference type="FunFam" id="1.50.10.130:FF:000001">
    <property type="entry name" value="Isoprene synthase, chloroplastic"/>
    <property type="match status" value="1"/>
</dbReference>
<dbReference type="Gene3D" id="1.10.600.10">
    <property type="entry name" value="Farnesyl Diphosphate Synthase"/>
    <property type="match status" value="1"/>
</dbReference>
<dbReference type="Gene3D" id="1.50.10.130">
    <property type="entry name" value="Terpene synthase, N-terminal domain"/>
    <property type="match status" value="1"/>
</dbReference>
<dbReference type="InterPro" id="IPR008949">
    <property type="entry name" value="Isoprenoid_synthase_dom_sf"/>
</dbReference>
<dbReference type="InterPro" id="IPR034741">
    <property type="entry name" value="Terpene_cyclase-like_1_C"/>
</dbReference>
<dbReference type="InterPro" id="IPR044814">
    <property type="entry name" value="Terpene_cyclase_plant_C1"/>
</dbReference>
<dbReference type="InterPro" id="IPR001906">
    <property type="entry name" value="Terpene_synth_N"/>
</dbReference>
<dbReference type="InterPro" id="IPR036965">
    <property type="entry name" value="Terpene_synth_N_sf"/>
</dbReference>
<dbReference type="InterPro" id="IPR050148">
    <property type="entry name" value="Terpene_synthase-like"/>
</dbReference>
<dbReference type="InterPro" id="IPR005630">
    <property type="entry name" value="Terpene_synthase_metal-bd"/>
</dbReference>
<dbReference type="InterPro" id="IPR008930">
    <property type="entry name" value="Terpenoid_cyclase/PrenylTrfase"/>
</dbReference>
<dbReference type="PANTHER" id="PTHR31225:SF245">
    <property type="entry name" value="(-)-ALPHA-TERPINEOL SYNTHASE-LIKE"/>
    <property type="match status" value="1"/>
</dbReference>
<dbReference type="PANTHER" id="PTHR31225">
    <property type="entry name" value="OS04G0344100 PROTEIN-RELATED"/>
    <property type="match status" value="1"/>
</dbReference>
<dbReference type="Pfam" id="PF01397">
    <property type="entry name" value="Terpene_synth"/>
    <property type="match status" value="1"/>
</dbReference>
<dbReference type="Pfam" id="PF03936">
    <property type="entry name" value="Terpene_synth_C"/>
    <property type="match status" value="1"/>
</dbReference>
<dbReference type="SFLD" id="SFLDS00005">
    <property type="entry name" value="Isoprenoid_Synthase_Type_I"/>
    <property type="match status" value="1"/>
</dbReference>
<dbReference type="SFLD" id="SFLDG01019">
    <property type="entry name" value="Terpene_Cyclase_Like_1_C_Termi"/>
    <property type="match status" value="1"/>
</dbReference>
<dbReference type="SUPFAM" id="SSF48239">
    <property type="entry name" value="Terpenoid cyclases/Protein prenyltransferases"/>
    <property type="match status" value="1"/>
</dbReference>
<dbReference type="SUPFAM" id="SSF48576">
    <property type="entry name" value="Terpenoid synthases"/>
    <property type="match status" value="1"/>
</dbReference>
<protein>
    <recommendedName>
        <fullName>Santalene synthase</fullName>
        <shortName>SauSSy</shortName>
    </recommendedName>
    <alternativeName>
        <fullName>Alpha-santalene synthase</fullName>
        <ecNumber evidence="3">4.2.3.82</ecNumber>
    </alternativeName>
    <alternativeName>
        <fullName>Beta-santalene synthase</fullName>
        <ecNumber evidence="3">4.2.3.83</ecNumber>
    </alternativeName>
    <alternativeName>
        <fullName>Exo-alpha-bergamotene synthase</fullName>
        <ecNumber evidence="3">4.2.3.81</ecNumber>
    </alternativeName>
</protein>
<keyword id="KW-0456">Lyase</keyword>
<keyword id="KW-0460">Magnesium</keyword>
<keyword id="KW-0464">Manganese</keyword>
<keyword id="KW-0479">Metal-binding</keyword>
<accession>E3W203</accession>